<accession>Q10NB9</accession>
<accession>A0A0P0VW30</accession>
<dbReference type="EC" id="3.1.3.16"/>
<dbReference type="EMBL" id="DP000009">
    <property type="protein sequence ID" value="ABF95248.1"/>
    <property type="molecule type" value="Genomic_DNA"/>
</dbReference>
<dbReference type="EMBL" id="AP008209">
    <property type="protein sequence ID" value="BAF11619.1"/>
    <property type="molecule type" value="Genomic_DNA"/>
</dbReference>
<dbReference type="EMBL" id="AP014959">
    <property type="protein sequence ID" value="BAS83501.1"/>
    <property type="molecule type" value="Genomic_DNA"/>
</dbReference>
<dbReference type="EMBL" id="CM000140">
    <property type="protein sequence ID" value="EAZ26436.1"/>
    <property type="molecule type" value="Genomic_DNA"/>
</dbReference>
<dbReference type="EMBL" id="AK107250">
    <property type="protein sequence ID" value="BAG98010.1"/>
    <property type="molecule type" value="mRNA"/>
</dbReference>
<dbReference type="RefSeq" id="XP_015629231.1">
    <property type="nucleotide sequence ID" value="XM_015773745.1"/>
</dbReference>
<dbReference type="SMR" id="Q10NB9"/>
<dbReference type="FunCoup" id="Q10NB9">
    <property type="interactions" value="85"/>
</dbReference>
<dbReference type="STRING" id="39947.Q10NB9"/>
<dbReference type="PaxDb" id="39947-Q10NB9"/>
<dbReference type="EnsemblPlants" id="Os03t0275100-01">
    <property type="protein sequence ID" value="Os03t0275100-01"/>
    <property type="gene ID" value="Os03g0275100"/>
</dbReference>
<dbReference type="EnsemblPlants" id="Os03t0275100-02">
    <property type="protein sequence ID" value="Os03t0275100-02"/>
    <property type="gene ID" value="Os03g0275100"/>
</dbReference>
<dbReference type="Gramene" id="Os03t0275100-01">
    <property type="protein sequence ID" value="Os03t0275100-01"/>
    <property type="gene ID" value="Os03g0275100"/>
</dbReference>
<dbReference type="Gramene" id="Os03t0275100-02">
    <property type="protein sequence ID" value="Os03t0275100-02"/>
    <property type="gene ID" value="Os03g0275100"/>
</dbReference>
<dbReference type="KEGG" id="dosa:Os03g0275100"/>
<dbReference type="eggNOG" id="KOG0700">
    <property type="taxonomic scope" value="Eukaryota"/>
</dbReference>
<dbReference type="HOGENOM" id="CLU_013173_12_1_1"/>
<dbReference type="InParanoid" id="Q10NB9"/>
<dbReference type="OMA" id="YVTCAPS"/>
<dbReference type="OrthoDB" id="420076at2759"/>
<dbReference type="Proteomes" id="UP000000763">
    <property type="component" value="Chromosome 3"/>
</dbReference>
<dbReference type="Proteomes" id="UP000007752">
    <property type="component" value="Chromosome 3"/>
</dbReference>
<dbReference type="Proteomes" id="UP000059680">
    <property type="component" value="Chromosome 3"/>
</dbReference>
<dbReference type="GO" id="GO:0046872">
    <property type="term" value="F:metal ion binding"/>
    <property type="evidence" value="ECO:0007669"/>
    <property type="project" value="UniProtKB-KW"/>
</dbReference>
<dbReference type="GO" id="GO:0004722">
    <property type="term" value="F:protein serine/threonine phosphatase activity"/>
    <property type="evidence" value="ECO:0007669"/>
    <property type="project" value="UniProtKB-EC"/>
</dbReference>
<dbReference type="GO" id="GO:0007165">
    <property type="term" value="P:signal transduction"/>
    <property type="evidence" value="ECO:0000318"/>
    <property type="project" value="GO_Central"/>
</dbReference>
<dbReference type="CDD" id="cd00143">
    <property type="entry name" value="PP2Cc"/>
    <property type="match status" value="1"/>
</dbReference>
<dbReference type="Gene3D" id="3.60.40.10">
    <property type="entry name" value="PPM-type phosphatase domain"/>
    <property type="match status" value="1"/>
</dbReference>
<dbReference type="InterPro" id="IPR015655">
    <property type="entry name" value="PP2C"/>
</dbReference>
<dbReference type="InterPro" id="IPR036457">
    <property type="entry name" value="PPM-type-like_dom_sf"/>
</dbReference>
<dbReference type="InterPro" id="IPR001932">
    <property type="entry name" value="PPM-type_phosphatase-like_dom"/>
</dbReference>
<dbReference type="PANTHER" id="PTHR13832">
    <property type="entry name" value="PROTEIN PHOSPHATASE 2C"/>
    <property type="match status" value="1"/>
</dbReference>
<dbReference type="PANTHER" id="PTHR13832:SF349">
    <property type="entry name" value="PROTEIN PHOSPHATASE 2C 31-RELATED"/>
    <property type="match status" value="1"/>
</dbReference>
<dbReference type="Pfam" id="PF00481">
    <property type="entry name" value="PP2C"/>
    <property type="match status" value="1"/>
</dbReference>
<dbReference type="SMART" id="SM00332">
    <property type="entry name" value="PP2Cc"/>
    <property type="match status" value="1"/>
</dbReference>
<dbReference type="SUPFAM" id="SSF81606">
    <property type="entry name" value="PP2C-like"/>
    <property type="match status" value="1"/>
</dbReference>
<dbReference type="PROSITE" id="PS51746">
    <property type="entry name" value="PPM_2"/>
    <property type="match status" value="1"/>
</dbReference>
<gene>
    <name type="ordered locus">Os03g0275100</name>
    <name type="ordered locus">LOC_Os03g16760</name>
    <name type="ORF">OsJ_009919</name>
</gene>
<proteinExistence type="evidence at transcript level"/>
<name>P2C31_ORYSJ</name>
<comment type="catalytic activity">
    <reaction>
        <text>O-phospho-L-seryl-[protein] + H2O = L-seryl-[protein] + phosphate</text>
        <dbReference type="Rhea" id="RHEA:20629"/>
        <dbReference type="Rhea" id="RHEA-COMP:9863"/>
        <dbReference type="Rhea" id="RHEA-COMP:11604"/>
        <dbReference type="ChEBI" id="CHEBI:15377"/>
        <dbReference type="ChEBI" id="CHEBI:29999"/>
        <dbReference type="ChEBI" id="CHEBI:43474"/>
        <dbReference type="ChEBI" id="CHEBI:83421"/>
        <dbReference type="EC" id="3.1.3.16"/>
    </reaction>
</comment>
<comment type="catalytic activity">
    <reaction>
        <text>O-phospho-L-threonyl-[protein] + H2O = L-threonyl-[protein] + phosphate</text>
        <dbReference type="Rhea" id="RHEA:47004"/>
        <dbReference type="Rhea" id="RHEA-COMP:11060"/>
        <dbReference type="Rhea" id="RHEA-COMP:11605"/>
        <dbReference type="ChEBI" id="CHEBI:15377"/>
        <dbReference type="ChEBI" id="CHEBI:30013"/>
        <dbReference type="ChEBI" id="CHEBI:43474"/>
        <dbReference type="ChEBI" id="CHEBI:61977"/>
        <dbReference type="EC" id="3.1.3.16"/>
    </reaction>
</comment>
<comment type="cofactor">
    <cofactor evidence="1">
        <name>Mg(2+)</name>
        <dbReference type="ChEBI" id="CHEBI:18420"/>
    </cofactor>
    <cofactor evidence="1">
        <name>Mn(2+)</name>
        <dbReference type="ChEBI" id="CHEBI:29035"/>
    </cofactor>
    <text evidence="1">Binds 2 magnesium or manganese ions per subunit.</text>
</comment>
<comment type="similarity">
    <text evidence="4">Belongs to the PP2C family.</text>
</comment>
<feature type="chain" id="PRO_0000363277" description="Probable protein phosphatase 2C 31">
    <location>
        <begin position="1"/>
        <end position="631"/>
    </location>
</feature>
<feature type="domain" description="PPM-type phosphatase" evidence="2">
    <location>
        <begin position="221"/>
        <end position="622"/>
    </location>
</feature>
<feature type="region of interest" description="Disordered" evidence="3">
    <location>
        <begin position="119"/>
        <end position="142"/>
    </location>
</feature>
<feature type="region of interest" description="Disordered" evidence="3">
    <location>
        <begin position="205"/>
        <end position="231"/>
    </location>
</feature>
<feature type="region of interest" description="Disordered" evidence="3">
    <location>
        <begin position="324"/>
        <end position="347"/>
    </location>
</feature>
<feature type="compositionally biased region" description="Polar residues" evidence="3">
    <location>
        <begin position="131"/>
        <end position="140"/>
    </location>
</feature>
<feature type="binding site" evidence="1">
    <location>
        <position position="261"/>
    </location>
    <ligand>
        <name>Mn(2+)</name>
        <dbReference type="ChEBI" id="CHEBI:29035"/>
        <label>1</label>
    </ligand>
</feature>
<feature type="binding site" evidence="1">
    <location>
        <position position="261"/>
    </location>
    <ligand>
        <name>Mn(2+)</name>
        <dbReference type="ChEBI" id="CHEBI:29035"/>
        <label>2</label>
    </ligand>
</feature>
<feature type="binding site" evidence="1">
    <location>
        <position position="262"/>
    </location>
    <ligand>
        <name>Mn(2+)</name>
        <dbReference type="ChEBI" id="CHEBI:29035"/>
        <label>1</label>
    </ligand>
</feature>
<feature type="binding site" evidence="1">
    <location>
        <position position="550"/>
    </location>
    <ligand>
        <name>Mn(2+)</name>
        <dbReference type="ChEBI" id="CHEBI:29035"/>
        <label>2</label>
    </ligand>
</feature>
<feature type="binding site" evidence="1">
    <location>
        <position position="613"/>
    </location>
    <ligand>
        <name>Mn(2+)</name>
        <dbReference type="ChEBI" id="CHEBI:29035"/>
        <label>2</label>
    </ligand>
</feature>
<sequence length="631" mass="68745">MGNGITKNPCFSGDPYAAAVASDPLPDDSHGHSFTYVPSSAAAFDHSPRSAAASSETSYFSLSGAAISANPATSASMPSFRLYNELTWPPSTACTFESSRSFAAAPLIQAAPPRLSMSGPLHATSGRFSEASGSASTASDRFSDHPFMDGMLDRASSASSTARLMPSFSHLMSEPRVAQSGLSNERSLIRSLVRVASKLRFGVPLSGRRSNGPAEPTTKSDGDYRSTPKGNVEWAQGMAGEDRFHVAVSEEHGWVFVGIYDGFNGPDATDYLFANLYVAVHRELKGVLWDDIQGVDVVTDNLPDPALANATHLCFLDAGGVGGGGDDDPDAERKAKRGRIERNADDDGASSVHRDVLKALARALARTEEAFFAAAEERAAQSPELGLVGSCVLVMLMKGKDVYLMNVGDSRAVLARRREPDFKDIFFRPDQDLQLLKAEVMRELEAHDRNGLQCVQLTPEHSAAAEEEVRRIRSQHLTDRQAVVNGRVKGKLSVTRAFGAGYLKQPKWNDRLLEAFKVDYIGAEPYISCTPSLRHHRISSNDRFLVLSSDGLYQYFTNKEVVDQVAMFTAEQPDGDPAKHLVGELVLRAARKAGMDCRRLLEIPHGDRRNYHDDVSIIVMSFEGRIWRSSV</sequence>
<organism>
    <name type="scientific">Oryza sativa subsp. japonica</name>
    <name type="common">Rice</name>
    <dbReference type="NCBI Taxonomy" id="39947"/>
    <lineage>
        <taxon>Eukaryota</taxon>
        <taxon>Viridiplantae</taxon>
        <taxon>Streptophyta</taxon>
        <taxon>Embryophyta</taxon>
        <taxon>Tracheophyta</taxon>
        <taxon>Spermatophyta</taxon>
        <taxon>Magnoliopsida</taxon>
        <taxon>Liliopsida</taxon>
        <taxon>Poales</taxon>
        <taxon>Poaceae</taxon>
        <taxon>BOP clade</taxon>
        <taxon>Oryzoideae</taxon>
        <taxon>Oryzeae</taxon>
        <taxon>Oryzinae</taxon>
        <taxon>Oryza</taxon>
        <taxon>Oryza sativa</taxon>
    </lineage>
</organism>
<keyword id="KW-0378">Hydrolase</keyword>
<keyword id="KW-0460">Magnesium</keyword>
<keyword id="KW-0464">Manganese</keyword>
<keyword id="KW-0479">Metal-binding</keyword>
<keyword id="KW-0904">Protein phosphatase</keyword>
<keyword id="KW-1185">Reference proteome</keyword>
<evidence type="ECO:0000250" key="1"/>
<evidence type="ECO:0000255" key="2">
    <source>
        <dbReference type="PROSITE-ProRule" id="PRU01082"/>
    </source>
</evidence>
<evidence type="ECO:0000256" key="3">
    <source>
        <dbReference type="SAM" id="MobiDB-lite"/>
    </source>
</evidence>
<evidence type="ECO:0000305" key="4"/>
<protein>
    <recommendedName>
        <fullName>Probable protein phosphatase 2C 31</fullName>
        <shortName>OsPP2C31</shortName>
        <ecNumber>3.1.3.16</ecNumber>
    </recommendedName>
</protein>
<reference key="1">
    <citation type="journal article" date="2005" name="Genome Res.">
        <title>Sequence, annotation, and analysis of synteny between rice chromosome 3 and diverged grass species.</title>
        <authorList>
            <consortium name="The rice chromosome 3 sequencing consortium"/>
            <person name="Buell C.R."/>
            <person name="Yuan Q."/>
            <person name="Ouyang S."/>
            <person name="Liu J."/>
            <person name="Zhu W."/>
            <person name="Wang A."/>
            <person name="Maiti R."/>
            <person name="Haas B."/>
            <person name="Wortman J."/>
            <person name="Pertea M."/>
            <person name="Jones K.M."/>
            <person name="Kim M."/>
            <person name="Overton L."/>
            <person name="Tsitrin T."/>
            <person name="Fadrosh D."/>
            <person name="Bera J."/>
            <person name="Weaver B."/>
            <person name="Jin S."/>
            <person name="Johri S."/>
            <person name="Reardon M."/>
            <person name="Webb K."/>
            <person name="Hill J."/>
            <person name="Moffat K."/>
            <person name="Tallon L."/>
            <person name="Van Aken S."/>
            <person name="Lewis M."/>
            <person name="Utterback T."/>
            <person name="Feldblyum T."/>
            <person name="Zismann V."/>
            <person name="Iobst S."/>
            <person name="Hsiao J."/>
            <person name="de Vazeille A.R."/>
            <person name="Salzberg S.L."/>
            <person name="White O."/>
            <person name="Fraser C.M."/>
            <person name="Yu Y."/>
            <person name="Kim H."/>
            <person name="Rambo T."/>
            <person name="Currie J."/>
            <person name="Collura K."/>
            <person name="Kernodle-Thompson S."/>
            <person name="Wei F."/>
            <person name="Kudrna K."/>
            <person name="Ammiraju J.S.S."/>
            <person name="Luo M."/>
            <person name="Goicoechea J.L."/>
            <person name="Wing R.A."/>
            <person name="Henry D."/>
            <person name="Oates R."/>
            <person name="Palmer M."/>
            <person name="Pries G."/>
            <person name="Saski C."/>
            <person name="Simmons J."/>
            <person name="Soderlund C."/>
            <person name="Nelson W."/>
            <person name="de la Bastide M."/>
            <person name="Spiegel L."/>
            <person name="Nascimento L."/>
            <person name="Huang E."/>
            <person name="Preston R."/>
            <person name="Zutavern T."/>
            <person name="Palmer L."/>
            <person name="O'Shaughnessy A."/>
            <person name="Dike S."/>
            <person name="McCombie W.R."/>
            <person name="Minx P."/>
            <person name="Cordum H."/>
            <person name="Wilson R."/>
            <person name="Jin W."/>
            <person name="Lee H.R."/>
            <person name="Jiang J."/>
            <person name="Jackson S."/>
        </authorList>
    </citation>
    <scope>NUCLEOTIDE SEQUENCE [LARGE SCALE GENOMIC DNA]</scope>
    <source>
        <strain>cv. Nipponbare</strain>
    </source>
</reference>
<reference key="2">
    <citation type="journal article" date="2005" name="Nature">
        <title>The map-based sequence of the rice genome.</title>
        <authorList>
            <consortium name="International rice genome sequencing project (IRGSP)"/>
        </authorList>
    </citation>
    <scope>NUCLEOTIDE SEQUENCE [LARGE SCALE GENOMIC DNA]</scope>
    <source>
        <strain>cv. Nipponbare</strain>
    </source>
</reference>
<reference key="3">
    <citation type="journal article" date="2008" name="Nucleic Acids Res.">
        <title>The rice annotation project database (RAP-DB): 2008 update.</title>
        <authorList>
            <consortium name="The rice annotation project (RAP)"/>
        </authorList>
    </citation>
    <scope>GENOME REANNOTATION</scope>
    <source>
        <strain>cv. Nipponbare</strain>
    </source>
</reference>
<reference key="4">
    <citation type="journal article" date="2013" name="Rice">
        <title>Improvement of the Oryza sativa Nipponbare reference genome using next generation sequence and optical map data.</title>
        <authorList>
            <person name="Kawahara Y."/>
            <person name="de la Bastide M."/>
            <person name="Hamilton J.P."/>
            <person name="Kanamori H."/>
            <person name="McCombie W.R."/>
            <person name="Ouyang S."/>
            <person name="Schwartz D.C."/>
            <person name="Tanaka T."/>
            <person name="Wu J."/>
            <person name="Zhou S."/>
            <person name="Childs K.L."/>
            <person name="Davidson R.M."/>
            <person name="Lin H."/>
            <person name="Quesada-Ocampo L."/>
            <person name="Vaillancourt B."/>
            <person name="Sakai H."/>
            <person name="Lee S.S."/>
            <person name="Kim J."/>
            <person name="Numa H."/>
            <person name="Itoh T."/>
            <person name="Buell C.R."/>
            <person name="Matsumoto T."/>
        </authorList>
    </citation>
    <scope>GENOME REANNOTATION</scope>
    <source>
        <strain>cv. Nipponbare</strain>
    </source>
</reference>
<reference key="5">
    <citation type="journal article" date="2005" name="PLoS Biol.">
        <title>The genomes of Oryza sativa: a history of duplications.</title>
        <authorList>
            <person name="Yu J."/>
            <person name="Wang J."/>
            <person name="Lin W."/>
            <person name="Li S."/>
            <person name="Li H."/>
            <person name="Zhou J."/>
            <person name="Ni P."/>
            <person name="Dong W."/>
            <person name="Hu S."/>
            <person name="Zeng C."/>
            <person name="Zhang J."/>
            <person name="Zhang Y."/>
            <person name="Li R."/>
            <person name="Xu Z."/>
            <person name="Li S."/>
            <person name="Li X."/>
            <person name="Zheng H."/>
            <person name="Cong L."/>
            <person name="Lin L."/>
            <person name="Yin J."/>
            <person name="Geng J."/>
            <person name="Li G."/>
            <person name="Shi J."/>
            <person name="Liu J."/>
            <person name="Lv H."/>
            <person name="Li J."/>
            <person name="Wang J."/>
            <person name="Deng Y."/>
            <person name="Ran L."/>
            <person name="Shi X."/>
            <person name="Wang X."/>
            <person name="Wu Q."/>
            <person name="Li C."/>
            <person name="Ren X."/>
            <person name="Wang J."/>
            <person name="Wang X."/>
            <person name="Li D."/>
            <person name="Liu D."/>
            <person name="Zhang X."/>
            <person name="Ji Z."/>
            <person name="Zhao W."/>
            <person name="Sun Y."/>
            <person name="Zhang Z."/>
            <person name="Bao J."/>
            <person name="Han Y."/>
            <person name="Dong L."/>
            <person name="Ji J."/>
            <person name="Chen P."/>
            <person name="Wu S."/>
            <person name="Liu J."/>
            <person name="Xiao Y."/>
            <person name="Bu D."/>
            <person name="Tan J."/>
            <person name="Yang L."/>
            <person name="Ye C."/>
            <person name="Zhang J."/>
            <person name="Xu J."/>
            <person name="Zhou Y."/>
            <person name="Yu Y."/>
            <person name="Zhang B."/>
            <person name="Zhuang S."/>
            <person name="Wei H."/>
            <person name="Liu B."/>
            <person name="Lei M."/>
            <person name="Yu H."/>
            <person name="Li Y."/>
            <person name="Xu H."/>
            <person name="Wei S."/>
            <person name="He X."/>
            <person name="Fang L."/>
            <person name="Zhang Z."/>
            <person name="Zhang Y."/>
            <person name="Huang X."/>
            <person name="Su Z."/>
            <person name="Tong W."/>
            <person name="Li J."/>
            <person name="Tong Z."/>
            <person name="Li S."/>
            <person name="Ye J."/>
            <person name="Wang L."/>
            <person name="Fang L."/>
            <person name="Lei T."/>
            <person name="Chen C.-S."/>
            <person name="Chen H.-C."/>
            <person name="Xu Z."/>
            <person name="Li H."/>
            <person name="Huang H."/>
            <person name="Zhang F."/>
            <person name="Xu H."/>
            <person name="Li N."/>
            <person name="Zhao C."/>
            <person name="Li S."/>
            <person name="Dong L."/>
            <person name="Huang Y."/>
            <person name="Li L."/>
            <person name="Xi Y."/>
            <person name="Qi Q."/>
            <person name="Li W."/>
            <person name="Zhang B."/>
            <person name="Hu W."/>
            <person name="Zhang Y."/>
            <person name="Tian X."/>
            <person name="Jiao Y."/>
            <person name="Liang X."/>
            <person name="Jin J."/>
            <person name="Gao L."/>
            <person name="Zheng W."/>
            <person name="Hao B."/>
            <person name="Liu S.-M."/>
            <person name="Wang W."/>
            <person name="Yuan L."/>
            <person name="Cao M."/>
            <person name="McDermott J."/>
            <person name="Samudrala R."/>
            <person name="Wang J."/>
            <person name="Wong G.K.-S."/>
            <person name="Yang H."/>
        </authorList>
    </citation>
    <scope>NUCLEOTIDE SEQUENCE [LARGE SCALE GENOMIC DNA]</scope>
    <source>
        <strain>cv. Nipponbare</strain>
    </source>
</reference>
<reference key="6">
    <citation type="journal article" date="2003" name="Science">
        <title>Collection, mapping, and annotation of over 28,000 cDNA clones from japonica rice.</title>
        <authorList>
            <consortium name="The rice full-length cDNA consortium"/>
        </authorList>
    </citation>
    <scope>NUCLEOTIDE SEQUENCE [LARGE SCALE MRNA]</scope>
    <source>
        <strain>cv. Nipponbare</strain>
    </source>
</reference>
<reference key="7">
    <citation type="journal article" date="2008" name="BMC Genomics">
        <title>Genome-wide and expression analysis of protein phosphatase 2C in rice and Arabidopsis.</title>
        <authorList>
            <person name="Xue T."/>
            <person name="Wang D."/>
            <person name="Zhang S."/>
            <person name="Ehlting J."/>
            <person name="Ni F."/>
            <person name="Jacab S."/>
            <person name="Zheng C."/>
            <person name="Zhong Y."/>
        </authorList>
    </citation>
    <scope>GENE FAMILY</scope>
    <scope>NOMENCLATURE</scope>
</reference>